<proteinExistence type="inferred from homology"/>
<organism>
    <name type="scientific">Bacillus velezensis (strain DSM 23117 / BGSC 10A6 / LMG 26770 / FZB42)</name>
    <name type="common">Bacillus amyloliquefaciens subsp. plantarum</name>
    <dbReference type="NCBI Taxonomy" id="326423"/>
    <lineage>
        <taxon>Bacteria</taxon>
        <taxon>Bacillati</taxon>
        <taxon>Bacillota</taxon>
        <taxon>Bacilli</taxon>
        <taxon>Bacillales</taxon>
        <taxon>Bacillaceae</taxon>
        <taxon>Bacillus</taxon>
        <taxon>Bacillus amyloliquefaciens group</taxon>
    </lineage>
</organism>
<reference key="1">
    <citation type="journal article" date="2007" name="Nat. Biotechnol.">
        <title>Comparative analysis of the complete genome sequence of the plant growth-promoting bacterium Bacillus amyloliquefaciens FZB42.</title>
        <authorList>
            <person name="Chen X.H."/>
            <person name="Koumoutsi A."/>
            <person name="Scholz R."/>
            <person name="Eisenreich A."/>
            <person name="Schneider K."/>
            <person name="Heinemeyer I."/>
            <person name="Morgenstern B."/>
            <person name="Voss B."/>
            <person name="Hess W.R."/>
            <person name="Reva O."/>
            <person name="Junge H."/>
            <person name="Voigt B."/>
            <person name="Jungblut P.R."/>
            <person name="Vater J."/>
            <person name="Suessmuth R."/>
            <person name="Liesegang H."/>
            <person name="Strittmatter A."/>
            <person name="Gottschalk G."/>
            <person name="Borriss R."/>
        </authorList>
    </citation>
    <scope>NUCLEOTIDE SEQUENCE [LARGE SCALE GENOMIC DNA]</scope>
    <source>
        <strain>DSM 23117 / BGSC 10A6 / LMG 26770 / FZB42</strain>
    </source>
</reference>
<evidence type="ECO:0000255" key="1">
    <source>
        <dbReference type="HAMAP-Rule" id="MF_01395"/>
    </source>
</evidence>
<evidence type="ECO:0000255" key="2">
    <source>
        <dbReference type="PROSITE-ProRule" id="PRU01136"/>
    </source>
</evidence>
<gene>
    <name evidence="1" type="primary">accD</name>
    <name type="ordered locus">RBAM_026260</name>
</gene>
<accession>A7Z7K8</accession>
<name>ACCD_BACVZ</name>
<comment type="function">
    <text evidence="1">Component of the acetyl coenzyme A carboxylase (ACC) complex. Biotin carboxylase (BC) catalyzes the carboxylation of biotin on its carrier protein (BCCP) and then the CO(2) group is transferred by the transcarboxylase to acetyl-CoA to form malonyl-CoA.</text>
</comment>
<comment type="catalytic activity">
    <reaction evidence="1">
        <text>N(6)-carboxybiotinyl-L-lysyl-[protein] + acetyl-CoA = N(6)-biotinyl-L-lysyl-[protein] + malonyl-CoA</text>
        <dbReference type="Rhea" id="RHEA:54728"/>
        <dbReference type="Rhea" id="RHEA-COMP:10505"/>
        <dbReference type="Rhea" id="RHEA-COMP:10506"/>
        <dbReference type="ChEBI" id="CHEBI:57288"/>
        <dbReference type="ChEBI" id="CHEBI:57384"/>
        <dbReference type="ChEBI" id="CHEBI:83144"/>
        <dbReference type="ChEBI" id="CHEBI:83145"/>
        <dbReference type="EC" id="2.1.3.15"/>
    </reaction>
</comment>
<comment type="cofactor">
    <cofactor evidence="1">
        <name>Zn(2+)</name>
        <dbReference type="ChEBI" id="CHEBI:29105"/>
    </cofactor>
    <text evidence="1">Binds 1 zinc ion per subunit.</text>
</comment>
<comment type="pathway">
    <text evidence="1">Lipid metabolism; malonyl-CoA biosynthesis; malonyl-CoA from acetyl-CoA: step 1/1.</text>
</comment>
<comment type="subunit">
    <text evidence="1">Acetyl-CoA carboxylase is a heterohexamer composed of biotin carboxyl carrier protein (AccB), biotin carboxylase (AccC) and two subunits each of ACCase subunit alpha (AccA) and ACCase subunit beta (AccD).</text>
</comment>
<comment type="subcellular location">
    <subcellularLocation>
        <location evidence="1">Cytoplasm</location>
    </subcellularLocation>
</comment>
<comment type="similarity">
    <text evidence="1">Belongs to the AccD/PCCB family.</text>
</comment>
<dbReference type="EC" id="2.1.3.15" evidence="1"/>
<dbReference type="EMBL" id="CP000560">
    <property type="protein sequence ID" value="ABS74984.1"/>
    <property type="molecule type" value="Genomic_DNA"/>
</dbReference>
<dbReference type="RefSeq" id="WP_012118171.1">
    <property type="nucleotide sequence ID" value="NC_009725.2"/>
</dbReference>
<dbReference type="SMR" id="A7Z7K8"/>
<dbReference type="GeneID" id="93081768"/>
<dbReference type="KEGG" id="bay:RBAM_026260"/>
<dbReference type="HOGENOM" id="CLU_015486_1_1_9"/>
<dbReference type="UniPathway" id="UPA00655">
    <property type="reaction ID" value="UER00711"/>
</dbReference>
<dbReference type="Proteomes" id="UP000001120">
    <property type="component" value="Chromosome"/>
</dbReference>
<dbReference type="GO" id="GO:0009317">
    <property type="term" value="C:acetyl-CoA carboxylase complex"/>
    <property type="evidence" value="ECO:0007669"/>
    <property type="project" value="InterPro"/>
</dbReference>
<dbReference type="GO" id="GO:0003989">
    <property type="term" value="F:acetyl-CoA carboxylase activity"/>
    <property type="evidence" value="ECO:0007669"/>
    <property type="project" value="InterPro"/>
</dbReference>
<dbReference type="GO" id="GO:0005524">
    <property type="term" value="F:ATP binding"/>
    <property type="evidence" value="ECO:0007669"/>
    <property type="project" value="UniProtKB-KW"/>
</dbReference>
<dbReference type="GO" id="GO:0016743">
    <property type="term" value="F:carboxyl- or carbamoyltransferase activity"/>
    <property type="evidence" value="ECO:0007669"/>
    <property type="project" value="UniProtKB-UniRule"/>
</dbReference>
<dbReference type="GO" id="GO:0008270">
    <property type="term" value="F:zinc ion binding"/>
    <property type="evidence" value="ECO:0007669"/>
    <property type="project" value="UniProtKB-UniRule"/>
</dbReference>
<dbReference type="GO" id="GO:0006633">
    <property type="term" value="P:fatty acid biosynthetic process"/>
    <property type="evidence" value="ECO:0007669"/>
    <property type="project" value="UniProtKB-KW"/>
</dbReference>
<dbReference type="GO" id="GO:2001295">
    <property type="term" value="P:malonyl-CoA biosynthetic process"/>
    <property type="evidence" value="ECO:0007669"/>
    <property type="project" value="UniProtKB-UniRule"/>
</dbReference>
<dbReference type="Gene3D" id="3.90.226.10">
    <property type="entry name" value="2-enoyl-CoA Hydratase, Chain A, domain 1"/>
    <property type="match status" value="1"/>
</dbReference>
<dbReference type="HAMAP" id="MF_01395">
    <property type="entry name" value="AcetylCoA_CT_beta"/>
    <property type="match status" value="1"/>
</dbReference>
<dbReference type="InterPro" id="IPR034733">
    <property type="entry name" value="AcCoA_carboxyl_beta"/>
</dbReference>
<dbReference type="InterPro" id="IPR000438">
    <property type="entry name" value="Acetyl_CoA_COase_Trfase_b_su"/>
</dbReference>
<dbReference type="InterPro" id="IPR029045">
    <property type="entry name" value="ClpP/crotonase-like_dom_sf"/>
</dbReference>
<dbReference type="InterPro" id="IPR011762">
    <property type="entry name" value="COA_CT_N"/>
</dbReference>
<dbReference type="InterPro" id="IPR041010">
    <property type="entry name" value="Znf-ACC"/>
</dbReference>
<dbReference type="NCBIfam" id="TIGR00515">
    <property type="entry name" value="accD"/>
    <property type="match status" value="1"/>
</dbReference>
<dbReference type="PANTHER" id="PTHR42995">
    <property type="entry name" value="ACETYL-COENZYME A CARBOXYLASE CARBOXYL TRANSFERASE SUBUNIT BETA, CHLOROPLASTIC"/>
    <property type="match status" value="1"/>
</dbReference>
<dbReference type="PANTHER" id="PTHR42995:SF5">
    <property type="entry name" value="ACETYL-COENZYME A CARBOXYLASE CARBOXYL TRANSFERASE SUBUNIT BETA, CHLOROPLASTIC"/>
    <property type="match status" value="1"/>
</dbReference>
<dbReference type="Pfam" id="PF01039">
    <property type="entry name" value="Carboxyl_trans"/>
    <property type="match status" value="1"/>
</dbReference>
<dbReference type="Pfam" id="PF17848">
    <property type="entry name" value="Zn_ribbon_ACC"/>
    <property type="match status" value="1"/>
</dbReference>
<dbReference type="PRINTS" id="PR01070">
    <property type="entry name" value="ACCCTRFRASEB"/>
</dbReference>
<dbReference type="SUPFAM" id="SSF52096">
    <property type="entry name" value="ClpP/crotonase"/>
    <property type="match status" value="1"/>
</dbReference>
<dbReference type="PROSITE" id="PS50980">
    <property type="entry name" value="COA_CT_NTER"/>
    <property type="match status" value="1"/>
</dbReference>
<feature type="chain" id="PRO_0000389668" description="Acetyl-coenzyme A carboxylase carboxyl transferase subunit beta">
    <location>
        <begin position="1"/>
        <end position="290"/>
    </location>
</feature>
<feature type="domain" description="CoA carboxyltransferase N-terminal" evidence="2">
    <location>
        <begin position="28"/>
        <end position="290"/>
    </location>
</feature>
<feature type="zinc finger region" description="C4-type" evidence="1">
    <location>
        <begin position="32"/>
        <end position="54"/>
    </location>
</feature>
<feature type="binding site" evidence="1">
    <location>
        <position position="32"/>
    </location>
    <ligand>
        <name>Zn(2+)</name>
        <dbReference type="ChEBI" id="CHEBI:29105"/>
    </ligand>
</feature>
<feature type="binding site" evidence="1">
    <location>
        <position position="35"/>
    </location>
    <ligand>
        <name>Zn(2+)</name>
        <dbReference type="ChEBI" id="CHEBI:29105"/>
    </ligand>
</feature>
<feature type="binding site" evidence="1">
    <location>
        <position position="51"/>
    </location>
    <ligand>
        <name>Zn(2+)</name>
        <dbReference type="ChEBI" id="CHEBI:29105"/>
    </ligand>
</feature>
<feature type="binding site" evidence="1">
    <location>
        <position position="54"/>
    </location>
    <ligand>
        <name>Zn(2+)</name>
        <dbReference type="ChEBI" id="CHEBI:29105"/>
    </ligand>
</feature>
<keyword id="KW-0067">ATP-binding</keyword>
<keyword id="KW-0963">Cytoplasm</keyword>
<keyword id="KW-0275">Fatty acid biosynthesis</keyword>
<keyword id="KW-0276">Fatty acid metabolism</keyword>
<keyword id="KW-0444">Lipid biosynthesis</keyword>
<keyword id="KW-0443">Lipid metabolism</keyword>
<keyword id="KW-0479">Metal-binding</keyword>
<keyword id="KW-0547">Nucleotide-binding</keyword>
<keyword id="KW-0808">Transferase</keyword>
<keyword id="KW-0862">Zinc</keyword>
<keyword id="KW-0863">Zinc-finger</keyword>
<sequence>MLKDIFTKKKKYASVPSEQAKHDVPEGIMTKCPKCKKIMLTKELDKNLRVCMNCGHHFPMNAKQRIESLLDEDSFEEFNQGMISENPLGFPEYLEKIEKDREKTSLNEAVVTGKGTISGFPAVIAIMDSTFRMGSMGSVVGEKITLAIEKAKEEKVPFIIFTASGGARMQEGVLSLMQMAKTSSALKLFSEEQGLIISVMTHPTTGGVSASFASLGDYNFAEPGTLIGFAGRRIIEQTIGEKLPEDFQTAEFLLKHGQLDAVIHRNDMKDKLAFLLDMHQTGGEYEWLQD</sequence>
<protein>
    <recommendedName>
        <fullName evidence="1">Acetyl-coenzyme A carboxylase carboxyl transferase subunit beta</fullName>
        <shortName evidence="1">ACCase subunit beta</shortName>
        <shortName evidence="1">Acetyl-CoA carboxylase carboxyltransferase subunit beta</shortName>
        <ecNumber evidence="1">2.1.3.15</ecNumber>
    </recommendedName>
</protein>